<protein>
    <recommendedName>
        <fullName evidence="1">Sulfurtransferase TusD</fullName>
        <ecNumber evidence="1">2.8.1.-</ecNumber>
    </recommendedName>
    <alternativeName>
        <fullName evidence="1">tRNA 2-thiouridine synthesizing protein D</fullName>
    </alternativeName>
</protein>
<dbReference type="EC" id="2.8.1.-" evidence="1"/>
<dbReference type="EMBL" id="CP001138">
    <property type="protein sequence ID" value="ACH49271.1"/>
    <property type="molecule type" value="Genomic_DNA"/>
</dbReference>
<dbReference type="RefSeq" id="WP_001268010.1">
    <property type="nucleotide sequence ID" value="NC_011149.1"/>
</dbReference>
<dbReference type="SMR" id="B5F8G3"/>
<dbReference type="KEGG" id="sea:SeAg_B3648"/>
<dbReference type="HOGENOM" id="CLU_132095_0_0_6"/>
<dbReference type="Proteomes" id="UP000008819">
    <property type="component" value="Chromosome"/>
</dbReference>
<dbReference type="GO" id="GO:1990228">
    <property type="term" value="C:sulfurtransferase complex"/>
    <property type="evidence" value="ECO:0007669"/>
    <property type="project" value="TreeGrafter"/>
</dbReference>
<dbReference type="GO" id="GO:0097163">
    <property type="term" value="F:sulfur carrier activity"/>
    <property type="evidence" value="ECO:0007669"/>
    <property type="project" value="TreeGrafter"/>
</dbReference>
<dbReference type="GO" id="GO:0016783">
    <property type="term" value="F:sulfurtransferase activity"/>
    <property type="evidence" value="ECO:0007669"/>
    <property type="project" value="UniProtKB-UniRule"/>
</dbReference>
<dbReference type="GO" id="GO:0002143">
    <property type="term" value="P:tRNA wobble position uridine thiolation"/>
    <property type="evidence" value="ECO:0007669"/>
    <property type="project" value="TreeGrafter"/>
</dbReference>
<dbReference type="FunFam" id="3.40.1260.10:FF:000001">
    <property type="entry name" value="Sulfurtransferase TusD"/>
    <property type="match status" value="1"/>
</dbReference>
<dbReference type="Gene3D" id="3.40.1260.10">
    <property type="entry name" value="DsrEFH-like"/>
    <property type="match status" value="1"/>
</dbReference>
<dbReference type="HAMAP" id="MF_00390">
    <property type="entry name" value="Thiourid_synth_D"/>
    <property type="match status" value="1"/>
</dbReference>
<dbReference type="InterPro" id="IPR027396">
    <property type="entry name" value="DsrEFH-like"/>
</dbReference>
<dbReference type="InterPro" id="IPR003787">
    <property type="entry name" value="Sulphur_relay_DsrE/F-like"/>
</dbReference>
<dbReference type="InterPro" id="IPR017463">
    <property type="entry name" value="Sulphur_relay_TusD/DsrE"/>
</dbReference>
<dbReference type="NCBIfam" id="NF001237">
    <property type="entry name" value="PRK00207.1"/>
    <property type="match status" value="1"/>
</dbReference>
<dbReference type="NCBIfam" id="TIGR03012">
    <property type="entry name" value="sulf_tusD_dsrE"/>
    <property type="match status" value="1"/>
</dbReference>
<dbReference type="PANTHER" id="PTHR34874">
    <property type="entry name" value="PROTEIN YCHN"/>
    <property type="match status" value="1"/>
</dbReference>
<dbReference type="PANTHER" id="PTHR34874:SF3">
    <property type="entry name" value="SULFURTRANSFERASE TUSD"/>
    <property type="match status" value="1"/>
</dbReference>
<dbReference type="Pfam" id="PF02635">
    <property type="entry name" value="DsrE"/>
    <property type="match status" value="1"/>
</dbReference>
<dbReference type="SUPFAM" id="SSF75169">
    <property type="entry name" value="DsrEFH-like"/>
    <property type="match status" value="1"/>
</dbReference>
<comment type="function">
    <text evidence="1">Part of a sulfur-relay system required for 2-thiolation of 5-methylaminomethyl-2-thiouridine (mnm(5)s(2)U) at tRNA wobble positions. Accepts sulfur from TusA and transfers it in turn to TusE.</text>
</comment>
<comment type="subunit">
    <text evidence="1">Heterohexamer, formed by a dimer of trimers. The hexameric TusBCD complex contains 2 copies each of TusB, TusC and TusD. The TusBCD complex interacts with TusE.</text>
</comment>
<comment type="subcellular location">
    <subcellularLocation>
        <location evidence="1">Cytoplasm</location>
    </subcellularLocation>
</comment>
<comment type="similarity">
    <text evidence="1">Belongs to the DsrE/TusD family.</text>
</comment>
<feature type="chain" id="PRO_1000122867" description="Sulfurtransferase TusD">
    <location>
        <begin position="1"/>
        <end position="128"/>
    </location>
</feature>
<feature type="active site" description="Cysteine persulfide intermediate" evidence="1">
    <location>
        <position position="78"/>
    </location>
</feature>
<evidence type="ECO:0000255" key="1">
    <source>
        <dbReference type="HAMAP-Rule" id="MF_00390"/>
    </source>
</evidence>
<reference key="1">
    <citation type="journal article" date="2011" name="J. Bacteriol.">
        <title>Comparative genomics of 28 Salmonella enterica isolates: evidence for CRISPR-mediated adaptive sublineage evolution.</title>
        <authorList>
            <person name="Fricke W.F."/>
            <person name="Mammel M.K."/>
            <person name="McDermott P.F."/>
            <person name="Tartera C."/>
            <person name="White D.G."/>
            <person name="Leclerc J.E."/>
            <person name="Ravel J."/>
            <person name="Cebula T.A."/>
        </authorList>
    </citation>
    <scope>NUCLEOTIDE SEQUENCE [LARGE SCALE GENOMIC DNA]</scope>
    <source>
        <strain>SL483</strain>
    </source>
</reference>
<keyword id="KW-0963">Cytoplasm</keyword>
<keyword id="KW-0808">Transferase</keyword>
<keyword id="KW-0819">tRNA processing</keyword>
<name>TUSD_SALA4</name>
<sequence>MRYAIMVTGPAYGTQQASSALQFAHALLNEGHELASVFFYREGVYNANLLTSPASDEYDLVRAWQKLNTQHGVALNICVAAALRRGIIDETEAGRLALPSANLQPGFTLSGLGALAEASLTCDRVVQF</sequence>
<accession>B5F8G3</accession>
<proteinExistence type="inferred from homology"/>
<organism>
    <name type="scientific">Salmonella agona (strain SL483)</name>
    <dbReference type="NCBI Taxonomy" id="454166"/>
    <lineage>
        <taxon>Bacteria</taxon>
        <taxon>Pseudomonadati</taxon>
        <taxon>Pseudomonadota</taxon>
        <taxon>Gammaproteobacteria</taxon>
        <taxon>Enterobacterales</taxon>
        <taxon>Enterobacteriaceae</taxon>
        <taxon>Salmonella</taxon>
    </lineage>
</organism>
<gene>
    <name evidence="1" type="primary">tusD</name>
    <name type="ordered locus">SeAg_B3648</name>
</gene>